<protein>
    <recommendedName>
        <fullName evidence="1">Ribonuclease HIII</fullName>
        <shortName evidence="1">RNase HIII</shortName>
        <ecNumber evidence="1">3.1.26.4</ecNumber>
    </recommendedName>
</protein>
<gene>
    <name evidence="1" type="primary">rnhC</name>
    <name type="ordered locus">SAV1140</name>
</gene>
<sequence>MANIVFKLSDKDITTLMSRITFDTENLPQGMKARAKYQNTTVNIYQSGKVMFQGNHAEAVSKELLPQHSQLNTNKTKKKNMANSSLEQTLMYDQFNCIGSDEAGSGDYFGPLTVCAAFVTKEHVPILKTLGVDDSKKLTDTKIVELAEQLVAFIPHSLLTLHNDKYNIQQAKGWTQVKMKAVLHNEAIKNVLEKIDSSQLDYIVIDQFAKREVYSHYALSDIPLPKKTKFETKGESKSLAIAVASIISRYAFITYMDQISKYINMTIPKGAGAKVDVIAAKIIKKYGLSRLDTISKKHFKNREKAQKILKPL</sequence>
<dbReference type="EC" id="3.1.26.4" evidence="1"/>
<dbReference type="EMBL" id="BA000017">
    <property type="protein sequence ID" value="BAB57302.1"/>
    <property type="molecule type" value="Genomic_DNA"/>
</dbReference>
<dbReference type="RefSeq" id="WP_001284282.1">
    <property type="nucleotide sequence ID" value="NC_002758.2"/>
</dbReference>
<dbReference type="SMR" id="Q99UW5"/>
<dbReference type="KEGG" id="sav:SAV1140"/>
<dbReference type="HOGENOM" id="CLU_059546_1_0_9"/>
<dbReference type="PhylomeDB" id="Q99UW5"/>
<dbReference type="Proteomes" id="UP000002481">
    <property type="component" value="Chromosome"/>
</dbReference>
<dbReference type="GO" id="GO:0005737">
    <property type="term" value="C:cytoplasm"/>
    <property type="evidence" value="ECO:0007669"/>
    <property type="project" value="UniProtKB-SubCell"/>
</dbReference>
<dbReference type="GO" id="GO:0032299">
    <property type="term" value="C:ribonuclease H2 complex"/>
    <property type="evidence" value="ECO:0007669"/>
    <property type="project" value="TreeGrafter"/>
</dbReference>
<dbReference type="GO" id="GO:0000287">
    <property type="term" value="F:magnesium ion binding"/>
    <property type="evidence" value="ECO:0007669"/>
    <property type="project" value="UniProtKB-UniRule"/>
</dbReference>
<dbReference type="GO" id="GO:0003723">
    <property type="term" value="F:RNA binding"/>
    <property type="evidence" value="ECO:0007669"/>
    <property type="project" value="InterPro"/>
</dbReference>
<dbReference type="GO" id="GO:0004523">
    <property type="term" value="F:RNA-DNA hybrid ribonuclease activity"/>
    <property type="evidence" value="ECO:0007669"/>
    <property type="project" value="UniProtKB-UniRule"/>
</dbReference>
<dbReference type="GO" id="GO:0043137">
    <property type="term" value="P:DNA replication, removal of RNA primer"/>
    <property type="evidence" value="ECO:0007669"/>
    <property type="project" value="TreeGrafter"/>
</dbReference>
<dbReference type="GO" id="GO:0006298">
    <property type="term" value="P:mismatch repair"/>
    <property type="evidence" value="ECO:0007669"/>
    <property type="project" value="TreeGrafter"/>
</dbReference>
<dbReference type="CDD" id="cd06590">
    <property type="entry name" value="RNase_HII_bacteria_HIII_like"/>
    <property type="match status" value="1"/>
</dbReference>
<dbReference type="CDD" id="cd14796">
    <property type="entry name" value="RNAse_HIII_N"/>
    <property type="match status" value="1"/>
</dbReference>
<dbReference type="FunFam" id="3.30.420.10:FF:000047">
    <property type="entry name" value="Ribonuclease HIII"/>
    <property type="match status" value="1"/>
</dbReference>
<dbReference type="Gene3D" id="3.30.420.10">
    <property type="entry name" value="Ribonuclease H-like superfamily/Ribonuclease H"/>
    <property type="match status" value="1"/>
</dbReference>
<dbReference type="Gene3D" id="3.30.310.10">
    <property type="entry name" value="TATA-Binding Protein"/>
    <property type="match status" value="1"/>
</dbReference>
<dbReference type="HAMAP" id="MF_00053">
    <property type="entry name" value="RNase_HIII"/>
    <property type="match status" value="1"/>
</dbReference>
<dbReference type="InterPro" id="IPR001352">
    <property type="entry name" value="RNase_HII/HIII"/>
</dbReference>
<dbReference type="InterPro" id="IPR024567">
    <property type="entry name" value="RNase_HII/HIII_dom"/>
</dbReference>
<dbReference type="InterPro" id="IPR004641">
    <property type="entry name" value="RNase_HIII"/>
</dbReference>
<dbReference type="InterPro" id="IPR024568">
    <property type="entry name" value="RNase_HIII_N"/>
</dbReference>
<dbReference type="InterPro" id="IPR012337">
    <property type="entry name" value="RNaseH-like_sf"/>
</dbReference>
<dbReference type="InterPro" id="IPR036397">
    <property type="entry name" value="RNaseH_sf"/>
</dbReference>
<dbReference type="InterPro" id="IPR012295">
    <property type="entry name" value="TBP_dom_sf"/>
</dbReference>
<dbReference type="NCBIfam" id="TIGR00716">
    <property type="entry name" value="rnhC"/>
    <property type="match status" value="1"/>
</dbReference>
<dbReference type="PANTHER" id="PTHR10954:SF23">
    <property type="entry name" value="RIBONUCLEASE"/>
    <property type="match status" value="1"/>
</dbReference>
<dbReference type="PANTHER" id="PTHR10954">
    <property type="entry name" value="RIBONUCLEASE H2 SUBUNIT A"/>
    <property type="match status" value="1"/>
</dbReference>
<dbReference type="Pfam" id="PF11858">
    <property type="entry name" value="DUF3378"/>
    <property type="match status" value="1"/>
</dbReference>
<dbReference type="Pfam" id="PF01351">
    <property type="entry name" value="RNase_HII"/>
    <property type="match status" value="1"/>
</dbReference>
<dbReference type="PIRSF" id="PIRSF037748">
    <property type="entry name" value="RnhC"/>
    <property type="match status" value="1"/>
</dbReference>
<dbReference type="SUPFAM" id="SSF53098">
    <property type="entry name" value="Ribonuclease H-like"/>
    <property type="match status" value="1"/>
</dbReference>
<dbReference type="PROSITE" id="PS51975">
    <property type="entry name" value="RNASE_H_2"/>
    <property type="match status" value="1"/>
</dbReference>
<accession>Q99UW5</accession>
<name>RNH3_STAAM</name>
<comment type="function">
    <text evidence="1">Endonuclease that specifically degrades the RNA of RNA-DNA hybrids.</text>
</comment>
<comment type="catalytic activity">
    <reaction evidence="1">
        <text>Endonucleolytic cleavage to 5'-phosphomonoester.</text>
        <dbReference type="EC" id="3.1.26.4"/>
    </reaction>
</comment>
<comment type="cofactor">
    <cofactor evidence="1">
        <name>Mn(2+)</name>
        <dbReference type="ChEBI" id="CHEBI:29035"/>
    </cofactor>
    <cofactor evidence="1">
        <name>Mg(2+)</name>
        <dbReference type="ChEBI" id="CHEBI:18420"/>
    </cofactor>
    <text evidence="1">Manganese or magnesium. Binds 1 divalent metal ion per monomer in the absence of substrate. May bind a second metal ion after substrate binding.</text>
</comment>
<comment type="subcellular location">
    <subcellularLocation>
        <location evidence="1">Cytoplasm</location>
    </subcellularLocation>
</comment>
<comment type="similarity">
    <text evidence="1">Belongs to the RNase HII family. RnhC subfamily.</text>
</comment>
<keyword id="KW-0963">Cytoplasm</keyword>
<keyword id="KW-0255">Endonuclease</keyword>
<keyword id="KW-0378">Hydrolase</keyword>
<keyword id="KW-0460">Magnesium</keyword>
<keyword id="KW-0479">Metal-binding</keyword>
<keyword id="KW-0540">Nuclease</keyword>
<proteinExistence type="inferred from homology"/>
<feature type="chain" id="PRO_0000111692" description="Ribonuclease HIII">
    <location>
        <begin position="1"/>
        <end position="312"/>
    </location>
</feature>
<feature type="domain" description="RNase H type-2" evidence="2">
    <location>
        <begin position="95"/>
        <end position="311"/>
    </location>
</feature>
<feature type="binding site" evidence="1">
    <location>
        <position position="101"/>
    </location>
    <ligand>
        <name>a divalent metal cation</name>
        <dbReference type="ChEBI" id="CHEBI:60240"/>
    </ligand>
</feature>
<feature type="binding site" evidence="1">
    <location>
        <position position="102"/>
    </location>
    <ligand>
        <name>a divalent metal cation</name>
        <dbReference type="ChEBI" id="CHEBI:60240"/>
    </ligand>
</feature>
<feature type="binding site" evidence="1">
    <location>
        <position position="206"/>
    </location>
    <ligand>
        <name>a divalent metal cation</name>
        <dbReference type="ChEBI" id="CHEBI:60240"/>
    </ligand>
</feature>
<reference key="1">
    <citation type="journal article" date="2001" name="Lancet">
        <title>Whole genome sequencing of meticillin-resistant Staphylococcus aureus.</title>
        <authorList>
            <person name="Kuroda M."/>
            <person name="Ohta T."/>
            <person name="Uchiyama I."/>
            <person name="Baba T."/>
            <person name="Yuzawa H."/>
            <person name="Kobayashi I."/>
            <person name="Cui L."/>
            <person name="Oguchi A."/>
            <person name="Aoki K."/>
            <person name="Nagai Y."/>
            <person name="Lian J.-Q."/>
            <person name="Ito T."/>
            <person name="Kanamori M."/>
            <person name="Matsumaru H."/>
            <person name="Maruyama A."/>
            <person name="Murakami H."/>
            <person name="Hosoyama A."/>
            <person name="Mizutani-Ui Y."/>
            <person name="Takahashi N.K."/>
            <person name="Sawano T."/>
            <person name="Inoue R."/>
            <person name="Kaito C."/>
            <person name="Sekimizu K."/>
            <person name="Hirakawa H."/>
            <person name="Kuhara S."/>
            <person name="Goto S."/>
            <person name="Yabuzaki J."/>
            <person name="Kanehisa M."/>
            <person name="Yamashita A."/>
            <person name="Oshima K."/>
            <person name="Furuya K."/>
            <person name="Yoshino C."/>
            <person name="Shiba T."/>
            <person name="Hattori M."/>
            <person name="Ogasawara N."/>
            <person name="Hayashi H."/>
            <person name="Hiramatsu K."/>
        </authorList>
    </citation>
    <scope>NUCLEOTIDE SEQUENCE [LARGE SCALE GENOMIC DNA]</scope>
    <source>
        <strain>Mu50 / ATCC 700699</strain>
    </source>
</reference>
<evidence type="ECO:0000255" key="1">
    <source>
        <dbReference type="HAMAP-Rule" id="MF_00053"/>
    </source>
</evidence>
<evidence type="ECO:0000255" key="2">
    <source>
        <dbReference type="PROSITE-ProRule" id="PRU01319"/>
    </source>
</evidence>
<organism>
    <name type="scientific">Staphylococcus aureus (strain Mu50 / ATCC 700699)</name>
    <dbReference type="NCBI Taxonomy" id="158878"/>
    <lineage>
        <taxon>Bacteria</taxon>
        <taxon>Bacillati</taxon>
        <taxon>Bacillota</taxon>
        <taxon>Bacilli</taxon>
        <taxon>Bacillales</taxon>
        <taxon>Staphylococcaceae</taxon>
        <taxon>Staphylococcus</taxon>
    </lineage>
</organism>